<evidence type="ECO:0000255" key="1">
    <source>
        <dbReference type="PROSITE-ProRule" id="PRU00742"/>
    </source>
</evidence>
<evidence type="ECO:0000269" key="2">
    <source>
    </source>
</evidence>
<evidence type="ECO:0000269" key="3">
    <source>
    </source>
</evidence>
<evidence type="ECO:0007829" key="4">
    <source>
        <dbReference type="PDB" id="3NIO"/>
    </source>
</evidence>
<name>GBUA_PSEAE</name>
<reference key="1">
    <citation type="journal article" date="2000" name="Nature">
        <title>Complete genome sequence of Pseudomonas aeruginosa PAO1, an opportunistic pathogen.</title>
        <authorList>
            <person name="Stover C.K."/>
            <person name="Pham X.-Q.T."/>
            <person name="Erwin A.L."/>
            <person name="Mizoguchi S.D."/>
            <person name="Warrener P."/>
            <person name="Hickey M.J."/>
            <person name="Brinkman F.S.L."/>
            <person name="Hufnagle W.O."/>
            <person name="Kowalik D.J."/>
            <person name="Lagrou M."/>
            <person name="Garber R.L."/>
            <person name="Goltry L."/>
            <person name="Tolentino E."/>
            <person name="Westbrock-Wadman S."/>
            <person name="Yuan Y."/>
            <person name="Brody L.L."/>
            <person name="Coulter S.N."/>
            <person name="Folger K.R."/>
            <person name="Kas A."/>
            <person name="Larbig K."/>
            <person name="Lim R.M."/>
            <person name="Smith K.A."/>
            <person name="Spencer D.H."/>
            <person name="Wong G.K.-S."/>
            <person name="Wu Z."/>
            <person name="Paulsen I.T."/>
            <person name="Reizer J."/>
            <person name="Saier M.H. Jr."/>
            <person name="Hancock R.E.W."/>
            <person name="Lory S."/>
            <person name="Olson M.V."/>
        </authorList>
    </citation>
    <scope>NUCLEOTIDE SEQUENCE [LARGE SCALE GENOMIC DNA]</scope>
    <source>
        <strain>ATCC 15692 / DSM 22644 / CIP 104116 / JCM 14847 / LMG 12228 / 1C / PRS 101 / PAO1</strain>
    </source>
</reference>
<reference key="2">
    <citation type="journal article" date="2002" name="J. Bacteriol.">
        <title>Characterization and regulation of the gbuA gene, encoding guanidinobutyrase in the arginine dehydrogenase pathway of Pseudomonas aeruginosa PAO1.</title>
        <authorList>
            <person name="Nakada Y."/>
            <person name="Itoh Y."/>
        </authorList>
    </citation>
    <scope>PROTEIN SEQUENCE OF 1-9</scope>
    <scope>FUNCTION</scope>
    <scope>CATALYTIC ACTIVITY</scope>
    <scope>COFACTOR</scope>
    <scope>BIOPHYSICOCHEMICAL PROPERTIES</scope>
    <source>
        <strain>ATCC 15692 / DSM 22644 / CIP 104116 / JCM 14847 / LMG 12228 / 1C / PRS 101 / PAO1</strain>
    </source>
</reference>
<reference key="3">
    <citation type="journal article" date="2011" name="J. Struct. Biol.">
        <title>Crystal structures of Pseudomonas aeruginosa guanidinobutyrase and guanidinopropionase, members of the ureohydrolase superfamily.</title>
        <authorList>
            <person name="Lee S.J."/>
            <person name="Kim D.J."/>
            <person name="Kim H.S."/>
            <person name="Lee B.I."/>
            <person name="Yoon H.J."/>
            <person name="Yoon J.Y."/>
            <person name="Kim K.H."/>
            <person name="Jang J.Y."/>
            <person name="Im H.N."/>
            <person name="An D.R."/>
            <person name="Song J.S."/>
            <person name="Kim H.J."/>
            <person name="Suh S.W."/>
        </authorList>
    </citation>
    <scope>X-RAY CRYSTALLOGRAPHY (2.00 ANGSTROMS) IN COMPLEX WITH MANGANESE</scope>
    <scope>FUNCTION</scope>
    <scope>CATALYTIC ACTIVITY</scope>
    <scope>COFACTOR</scope>
    <scope>BIOPHYSICOCHEMICAL PROPERTIES</scope>
    <scope>SUBUNIT</scope>
    <scope>MUTAGENESIS OF MET-161</scope>
    <source>
        <strain>ATCC 15692 / DSM 22644 / CIP 104116 / JCM 14847 / LMG 12228 / 1C / PRS 101 / PAO1</strain>
    </source>
</reference>
<keyword id="KW-0002">3D-structure</keyword>
<keyword id="KW-0903">Direct protein sequencing</keyword>
<keyword id="KW-0378">Hydrolase</keyword>
<keyword id="KW-0464">Manganese</keyword>
<keyword id="KW-0479">Metal-binding</keyword>
<keyword id="KW-1185">Reference proteome</keyword>
<organism>
    <name type="scientific">Pseudomonas aeruginosa (strain ATCC 15692 / DSM 22644 / CIP 104116 / JCM 14847 / LMG 12228 / 1C / PRS 101 / PAO1)</name>
    <dbReference type="NCBI Taxonomy" id="208964"/>
    <lineage>
        <taxon>Bacteria</taxon>
        <taxon>Pseudomonadati</taxon>
        <taxon>Pseudomonadota</taxon>
        <taxon>Gammaproteobacteria</taxon>
        <taxon>Pseudomonadales</taxon>
        <taxon>Pseudomonadaceae</taxon>
        <taxon>Pseudomonas</taxon>
    </lineage>
</organism>
<sequence length="319" mass="34728">MDKNLHQPLGGNEMPRFGGIATMMRLPHVQSPAELDALDAAFVGVPLDIGTSLRSGTRFGPREIRAESVMIRPYNMATGAAPFDSLNVADIGDVAINTFNLLEAVRIIEQEYDRILGHGILPLTLGGDHTITLPILRAIKKKHGKVGLVHVDAHADVNDHMFGEKIAHGTTFRRAVEEDLLDCDRVVQIGLRAQGYTAEDFNWSRKQGFRVVQAEECWHKSLEPLMAEVREKVGGGPVYLSFDIDGIDPAWAPGTGTPEIGGLTTIQAMEIIRGCQGLDLIGCDLVEVSPPYDTTGNTSLLGANLLYEMLCVLPGVVRR</sequence>
<proteinExistence type="evidence at protein level"/>
<dbReference type="EC" id="3.5.3.7" evidence="2 3"/>
<dbReference type="EMBL" id="AE004091">
    <property type="protein sequence ID" value="AAG04810.1"/>
    <property type="molecule type" value="Genomic_DNA"/>
</dbReference>
<dbReference type="PIR" id="H83468">
    <property type="entry name" value="H83468"/>
</dbReference>
<dbReference type="RefSeq" id="NP_250112.1">
    <property type="nucleotide sequence ID" value="NC_002516.2"/>
</dbReference>
<dbReference type="PDB" id="3NIO">
    <property type="method" value="X-ray"/>
    <property type="resolution" value="2.00 A"/>
    <property type="chains" value="A/B/C/D/E/F=1-319"/>
</dbReference>
<dbReference type="PDBsum" id="3NIO"/>
<dbReference type="SMR" id="Q9I3S3"/>
<dbReference type="FunCoup" id="Q9I3S3">
    <property type="interactions" value="577"/>
</dbReference>
<dbReference type="STRING" id="208964.PA1421"/>
<dbReference type="PaxDb" id="208964-PA1421"/>
<dbReference type="DNASU" id="881747"/>
<dbReference type="GeneID" id="881747"/>
<dbReference type="KEGG" id="pae:PA1421"/>
<dbReference type="PATRIC" id="fig|208964.12.peg.1470"/>
<dbReference type="PseudoCAP" id="PA1421"/>
<dbReference type="HOGENOM" id="CLU_039478_0_0_6"/>
<dbReference type="InParanoid" id="Q9I3S3"/>
<dbReference type="OrthoDB" id="9789727at2"/>
<dbReference type="PhylomeDB" id="Q9I3S3"/>
<dbReference type="BioCyc" id="MetaCyc:MONOMER-11558"/>
<dbReference type="BioCyc" id="PAER208964:G1FZ6-1447-MONOMER"/>
<dbReference type="BRENDA" id="3.5.3.7">
    <property type="organism ID" value="5087"/>
</dbReference>
<dbReference type="SABIO-RK" id="Q9I3S3"/>
<dbReference type="EvolutionaryTrace" id="Q9I3S3"/>
<dbReference type="Proteomes" id="UP000002438">
    <property type="component" value="Chromosome"/>
</dbReference>
<dbReference type="GO" id="GO:0008783">
    <property type="term" value="F:agmatinase activity"/>
    <property type="evidence" value="ECO:0000318"/>
    <property type="project" value="GO_Central"/>
</dbReference>
<dbReference type="GO" id="GO:0047971">
    <property type="term" value="F:guanidinobutyrase activity"/>
    <property type="evidence" value="ECO:0000314"/>
    <property type="project" value="PseudoCAP"/>
</dbReference>
<dbReference type="GO" id="GO:0046872">
    <property type="term" value="F:metal ion binding"/>
    <property type="evidence" value="ECO:0007669"/>
    <property type="project" value="UniProtKB-KW"/>
</dbReference>
<dbReference type="GO" id="GO:0006527">
    <property type="term" value="P:arginine catabolic process"/>
    <property type="evidence" value="ECO:0000314"/>
    <property type="project" value="PseudoCAP"/>
</dbReference>
<dbReference type="GO" id="GO:0033389">
    <property type="term" value="P:putrescine biosynthetic process from arginine, via agmatine"/>
    <property type="evidence" value="ECO:0000318"/>
    <property type="project" value="GO_Central"/>
</dbReference>
<dbReference type="CDD" id="cd11592">
    <property type="entry name" value="Agmatinase_PAH"/>
    <property type="match status" value="1"/>
</dbReference>
<dbReference type="FunFam" id="3.40.800.10:FF:000002">
    <property type="entry name" value="Agmatinase"/>
    <property type="match status" value="1"/>
</dbReference>
<dbReference type="Gene3D" id="3.40.800.10">
    <property type="entry name" value="Ureohydrolase domain"/>
    <property type="match status" value="1"/>
</dbReference>
<dbReference type="InterPro" id="IPR005925">
    <property type="entry name" value="Agmatinase-rel"/>
</dbReference>
<dbReference type="InterPro" id="IPR006035">
    <property type="entry name" value="Ureohydrolase"/>
</dbReference>
<dbReference type="InterPro" id="IPR023696">
    <property type="entry name" value="Ureohydrolase_dom_sf"/>
</dbReference>
<dbReference type="InterPro" id="IPR020855">
    <property type="entry name" value="Ureohydrolase_Mn_BS"/>
</dbReference>
<dbReference type="NCBIfam" id="TIGR01230">
    <property type="entry name" value="agmatinase"/>
    <property type="match status" value="1"/>
</dbReference>
<dbReference type="PANTHER" id="PTHR11358">
    <property type="entry name" value="ARGINASE/AGMATINASE"/>
    <property type="match status" value="1"/>
</dbReference>
<dbReference type="PANTHER" id="PTHR11358:SF26">
    <property type="entry name" value="GUANIDINO ACID HYDROLASE, MITOCHONDRIAL"/>
    <property type="match status" value="1"/>
</dbReference>
<dbReference type="Pfam" id="PF00491">
    <property type="entry name" value="Arginase"/>
    <property type="match status" value="1"/>
</dbReference>
<dbReference type="PIRSF" id="PIRSF036979">
    <property type="entry name" value="Arginase"/>
    <property type="match status" value="1"/>
</dbReference>
<dbReference type="PRINTS" id="PR00116">
    <property type="entry name" value="ARGINASE"/>
</dbReference>
<dbReference type="SUPFAM" id="SSF52768">
    <property type="entry name" value="Arginase/deacetylase"/>
    <property type="match status" value="1"/>
</dbReference>
<dbReference type="PROSITE" id="PS01053">
    <property type="entry name" value="ARGINASE_1"/>
    <property type="match status" value="1"/>
</dbReference>
<dbReference type="PROSITE" id="PS51409">
    <property type="entry name" value="ARGINASE_2"/>
    <property type="match status" value="1"/>
</dbReference>
<gene>
    <name type="primary">gbuA</name>
    <name type="ordered locus">PA1421</name>
</gene>
<accession>Q9I3S3</accession>
<comment type="function">
    <text evidence="2 3">Catalyzes specifically the hydrolysis of 4-guanidinobutanoate to 4-aminobutanoate and urea. Has no activity against arginine, agmatine, 3-guanidinopropionate and guanidinoacetate.</text>
</comment>
<comment type="catalytic activity">
    <reaction evidence="2 3">
        <text>4-guanidinobutanoate + H2O = urea + 4-aminobutanoate</text>
        <dbReference type="Rhea" id="RHEA:19501"/>
        <dbReference type="ChEBI" id="CHEBI:15377"/>
        <dbReference type="ChEBI" id="CHEBI:16199"/>
        <dbReference type="ChEBI" id="CHEBI:57486"/>
        <dbReference type="ChEBI" id="CHEBI:59888"/>
        <dbReference type="EC" id="3.5.3.7"/>
    </reaction>
</comment>
<comment type="cofactor">
    <cofactor evidence="1 2 3">
        <name>Mn(2+)</name>
        <dbReference type="ChEBI" id="CHEBI:29035"/>
    </cofactor>
    <text evidence="1 2 3">Binds 2 manganese ions per subunit.</text>
</comment>
<comment type="biophysicochemical properties">
    <kinetics>
        <KM evidence="2">49 mM for 4-guanidinobutanoate</KM>
        <KM evidence="3">10.7 mM for 4-guanidinobutanoate</KM>
        <text evidence="2 3">kcat is 1012 sec(-1) (PubMed:12029055). kcat is 94.7 sec(-1) (PubMed:21600989).</text>
    </kinetics>
    <phDependence>
        <text evidence="2">Optimum pH is 9.5.</text>
    </phDependence>
</comment>
<comment type="subunit">
    <text evidence="3">Homohexamer.</text>
</comment>
<comment type="similarity">
    <text evidence="1">Belongs to the arginase family. Agmatinase subfamily.</text>
</comment>
<protein>
    <recommendedName>
        <fullName>Guanidinobutyrase</fullName>
        <ecNumber evidence="2 3">3.5.3.7</ecNumber>
    </recommendedName>
</protein>
<feature type="chain" id="PRO_0000429141" description="Guanidinobutyrase">
    <location>
        <begin position="1"/>
        <end position="319"/>
    </location>
</feature>
<feature type="binding site" evidence="1 3">
    <location>
        <position position="129"/>
    </location>
    <ligand>
        <name>Mn(2+)</name>
        <dbReference type="ChEBI" id="CHEBI:29035"/>
        <label>1</label>
    </ligand>
</feature>
<feature type="binding site" evidence="1 3">
    <location>
        <position position="152"/>
    </location>
    <ligand>
        <name>Mn(2+)</name>
        <dbReference type="ChEBI" id="CHEBI:29035"/>
        <label>1</label>
    </ligand>
</feature>
<feature type="binding site" evidence="1 3">
    <location>
        <position position="152"/>
    </location>
    <ligand>
        <name>Mn(2+)</name>
        <dbReference type="ChEBI" id="CHEBI:29035"/>
        <label>2</label>
    </ligand>
</feature>
<feature type="binding site" evidence="1 3">
    <location>
        <position position="154"/>
    </location>
    <ligand>
        <name>Mn(2+)</name>
        <dbReference type="ChEBI" id="CHEBI:29035"/>
        <label>2</label>
    </ligand>
</feature>
<feature type="binding site" evidence="1 3">
    <location>
        <position position="156"/>
    </location>
    <ligand>
        <name>Mn(2+)</name>
        <dbReference type="ChEBI" id="CHEBI:29035"/>
        <label>1</label>
    </ligand>
</feature>
<feature type="binding site" evidence="1 3">
    <location>
        <position position="243"/>
    </location>
    <ligand>
        <name>Mn(2+)</name>
        <dbReference type="ChEBI" id="CHEBI:29035"/>
        <label>2</label>
    </ligand>
</feature>
<feature type="binding site" evidence="1 3">
    <location>
        <position position="245"/>
    </location>
    <ligand>
        <name>Mn(2+)</name>
        <dbReference type="ChEBI" id="CHEBI:29035"/>
        <label>2</label>
    </ligand>
</feature>
<feature type="mutagenesis site" description="Loss of activity." evidence="3">
    <original>M</original>
    <variation>Y</variation>
    <location>
        <position position="161"/>
    </location>
</feature>
<feature type="turn" evidence="4">
    <location>
        <begin position="11"/>
        <end position="13"/>
    </location>
</feature>
<feature type="helix" evidence="4">
    <location>
        <begin position="23"/>
        <end position="25"/>
    </location>
</feature>
<feature type="helix" evidence="4">
    <location>
        <begin position="32"/>
        <end position="35"/>
    </location>
</feature>
<feature type="strand" evidence="4">
    <location>
        <begin position="39"/>
        <end position="44"/>
    </location>
</feature>
<feature type="helix" evidence="4">
    <location>
        <begin position="57"/>
        <end position="59"/>
    </location>
</feature>
<feature type="helix" evidence="4">
    <location>
        <begin position="60"/>
        <end position="67"/>
    </location>
</feature>
<feature type="helix" evidence="4">
    <location>
        <begin position="68"/>
        <end position="70"/>
    </location>
</feature>
<feature type="strand" evidence="4">
    <location>
        <begin position="73"/>
        <end position="75"/>
    </location>
</feature>
<feature type="turn" evidence="4">
    <location>
        <begin position="76"/>
        <end position="78"/>
    </location>
</feature>
<feature type="helix" evidence="4">
    <location>
        <begin position="82"/>
        <end position="84"/>
    </location>
</feature>
<feature type="strand" evidence="4">
    <location>
        <begin position="88"/>
        <end position="93"/>
    </location>
</feature>
<feature type="helix" evidence="4">
    <location>
        <begin position="101"/>
        <end position="117"/>
    </location>
</feature>
<feature type="strand" evidence="4">
    <location>
        <begin position="121"/>
        <end position="125"/>
    </location>
</feature>
<feature type="helix" evidence="4">
    <location>
        <begin position="129"/>
        <end position="131"/>
    </location>
</feature>
<feature type="helix" evidence="4">
    <location>
        <begin position="132"/>
        <end position="139"/>
    </location>
</feature>
<feature type="strand" evidence="4">
    <location>
        <begin position="147"/>
        <end position="151"/>
    </location>
</feature>
<feature type="turn" evidence="4">
    <location>
        <begin position="168"/>
        <end position="170"/>
    </location>
</feature>
<feature type="helix" evidence="4">
    <location>
        <begin position="171"/>
        <end position="177"/>
    </location>
</feature>
<feature type="helix" evidence="4">
    <location>
        <begin position="183"/>
        <end position="185"/>
    </location>
</feature>
<feature type="strand" evidence="4">
    <location>
        <begin position="186"/>
        <end position="191"/>
    </location>
</feature>
<feature type="strand" evidence="4">
    <location>
        <begin position="193"/>
        <end position="197"/>
    </location>
</feature>
<feature type="helix" evidence="4">
    <location>
        <begin position="199"/>
        <end position="205"/>
    </location>
</feature>
<feature type="strand" evidence="4">
    <location>
        <begin position="210"/>
        <end position="213"/>
    </location>
</feature>
<feature type="helix" evidence="4">
    <location>
        <begin position="214"/>
        <end position="216"/>
    </location>
</feature>
<feature type="turn" evidence="4">
    <location>
        <begin position="217"/>
        <end position="219"/>
    </location>
</feature>
<feature type="helix" evidence="4">
    <location>
        <begin position="223"/>
        <end position="233"/>
    </location>
</feature>
<feature type="strand" evidence="4">
    <location>
        <begin position="235"/>
        <end position="243"/>
    </location>
</feature>
<feature type="helix" evidence="4">
    <location>
        <begin position="244"/>
        <end position="246"/>
    </location>
</feature>
<feature type="turn" evidence="4">
    <location>
        <begin position="249"/>
        <end position="251"/>
    </location>
</feature>
<feature type="strand" evidence="4">
    <location>
        <begin position="255"/>
        <end position="257"/>
    </location>
</feature>
<feature type="helix" evidence="4">
    <location>
        <begin position="265"/>
        <end position="273"/>
    </location>
</feature>
<feature type="turn" evidence="4">
    <location>
        <begin position="274"/>
        <end position="277"/>
    </location>
</feature>
<feature type="strand" evidence="4">
    <location>
        <begin position="278"/>
        <end position="286"/>
    </location>
</feature>
<feature type="helix" evidence="4">
    <location>
        <begin position="290"/>
        <end position="292"/>
    </location>
</feature>
<feature type="strand" evidence="4">
    <location>
        <begin position="294"/>
        <end position="296"/>
    </location>
</feature>
<feature type="helix" evidence="4">
    <location>
        <begin position="297"/>
        <end position="311"/>
    </location>
</feature>